<name>FABZ_ERYLH</name>
<evidence type="ECO:0000255" key="1">
    <source>
        <dbReference type="HAMAP-Rule" id="MF_00406"/>
    </source>
</evidence>
<reference key="1">
    <citation type="journal article" date="2009" name="J. Bacteriol.">
        <title>Complete genome sequence of Erythrobacter litoralis HTCC2594.</title>
        <authorList>
            <person name="Oh H.M."/>
            <person name="Giovannoni S.J."/>
            <person name="Ferriera S."/>
            <person name="Johnson J."/>
            <person name="Cho J.C."/>
        </authorList>
    </citation>
    <scope>NUCLEOTIDE SEQUENCE [LARGE SCALE GENOMIC DNA]</scope>
    <source>
        <strain>HTCC2594</strain>
    </source>
</reference>
<dbReference type="EC" id="4.2.1.59" evidence="1"/>
<dbReference type="EMBL" id="CP000157">
    <property type="protein sequence ID" value="ABC62857.1"/>
    <property type="molecule type" value="Genomic_DNA"/>
</dbReference>
<dbReference type="RefSeq" id="WP_011413733.1">
    <property type="nucleotide sequence ID" value="NC_007722.1"/>
</dbReference>
<dbReference type="SMR" id="Q2NBT4"/>
<dbReference type="STRING" id="314225.ELI_03825"/>
<dbReference type="KEGG" id="eli:ELI_03825"/>
<dbReference type="eggNOG" id="COG0764">
    <property type="taxonomic scope" value="Bacteria"/>
</dbReference>
<dbReference type="HOGENOM" id="CLU_078912_1_0_5"/>
<dbReference type="OrthoDB" id="9772788at2"/>
<dbReference type="Proteomes" id="UP000008808">
    <property type="component" value="Chromosome"/>
</dbReference>
<dbReference type="GO" id="GO:0005737">
    <property type="term" value="C:cytoplasm"/>
    <property type="evidence" value="ECO:0007669"/>
    <property type="project" value="UniProtKB-SubCell"/>
</dbReference>
<dbReference type="GO" id="GO:0016020">
    <property type="term" value="C:membrane"/>
    <property type="evidence" value="ECO:0007669"/>
    <property type="project" value="GOC"/>
</dbReference>
<dbReference type="GO" id="GO:0019171">
    <property type="term" value="F:(3R)-hydroxyacyl-[acyl-carrier-protein] dehydratase activity"/>
    <property type="evidence" value="ECO:0007669"/>
    <property type="project" value="UniProtKB-EC"/>
</dbReference>
<dbReference type="GO" id="GO:0006633">
    <property type="term" value="P:fatty acid biosynthetic process"/>
    <property type="evidence" value="ECO:0007669"/>
    <property type="project" value="UniProtKB-UniRule"/>
</dbReference>
<dbReference type="GO" id="GO:0009245">
    <property type="term" value="P:lipid A biosynthetic process"/>
    <property type="evidence" value="ECO:0007669"/>
    <property type="project" value="UniProtKB-UniRule"/>
</dbReference>
<dbReference type="CDD" id="cd01288">
    <property type="entry name" value="FabZ"/>
    <property type="match status" value="1"/>
</dbReference>
<dbReference type="FunFam" id="3.10.129.10:FF:000001">
    <property type="entry name" value="3-hydroxyacyl-[acyl-carrier-protein] dehydratase FabZ"/>
    <property type="match status" value="1"/>
</dbReference>
<dbReference type="Gene3D" id="3.10.129.10">
    <property type="entry name" value="Hotdog Thioesterase"/>
    <property type="match status" value="1"/>
</dbReference>
<dbReference type="HAMAP" id="MF_00406">
    <property type="entry name" value="FabZ"/>
    <property type="match status" value="1"/>
</dbReference>
<dbReference type="InterPro" id="IPR013114">
    <property type="entry name" value="FabA_FabZ"/>
</dbReference>
<dbReference type="InterPro" id="IPR010084">
    <property type="entry name" value="FabZ"/>
</dbReference>
<dbReference type="InterPro" id="IPR029069">
    <property type="entry name" value="HotDog_dom_sf"/>
</dbReference>
<dbReference type="NCBIfam" id="TIGR01750">
    <property type="entry name" value="fabZ"/>
    <property type="match status" value="1"/>
</dbReference>
<dbReference type="NCBIfam" id="NF000582">
    <property type="entry name" value="PRK00006.1"/>
    <property type="match status" value="1"/>
</dbReference>
<dbReference type="PANTHER" id="PTHR30272">
    <property type="entry name" value="3-HYDROXYACYL-[ACYL-CARRIER-PROTEIN] DEHYDRATASE"/>
    <property type="match status" value="1"/>
</dbReference>
<dbReference type="PANTHER" id="PTHR30272:SF1">
    <property type="entry name" value="3-HYDROXYACYL-[ACYL-CARRIER-PROTEIN] DEHYDRATASE"/>
    <property type="match status" value="1"/>
</dbReference>
<dbReference type="Pfam" id="PF07977">
    <property type="entry name" value="FabA"/>
    <property type="match status" value="1"/>
</dbReference>
<dbReference type="SUPFAM" id="SSF54637">
    <property type="entry name" value="Thioesterase/thiol ester dehydrase-isomerase"/>
    <property type="match status" value="1"/>
</dbReference>
<feature type="chain" id="PRO_0000301891" description="3-hydroxyacyl-[acyl-carrier-protein] dehydratase FabZ">
    <location>
        <begin position="1"/>
        <end position="151"/>
    </location>
</feature>
<feature type="active site" evidence="1">
    <location>
        <position position="53"/>
    </location>
</feature>
<protein>
    <recommendedName>
        <fullName evidence="1">3-hydroxyacyl-[acyl-carrier-protein] dehydratase FabZ</fullName>
        <ecNumber evidence="1">4.2.1.59</ecNumber>
    </recommendedName>
    <alternativeName>
        <fullName evidence="1">(3R)-hydroxymyristoyl-[acyl-carrier-protein] dehydratase</fullName>
        <shortName evidence="1">(3R)-hydroxymyristoyl-ACP dehydrase</shortName>
    </alternativeName>
    <alternativeName>
        <fullName evidence="1">Beta-hydroxyacyl-ACP dehydratase</fullName>
    </alternativeName>
</protein>
<comment type="function">
    <text evidence="1">Involved in unsaturated fatty acids biosynthesis. Catalyzes the dehydration of short chain beta-hydroxyacyl-ACPs and long chain saturated and unsaturated beta-hydroxyacyl-ACPs.</text>
</comment>
<comment type="catalytic activity">
    <reaction evidence="1">
        <text>a (3R)-hydroxyacyl-[ACP] = a (2E)-enoyl-[ACP] + H2O</text>
        <dbReference type="Rhea" id="RHEA:13097"/>
        <dbReference type="Rhea" id="RHEA-COMP:9925"/>
        <dbReference type="Rhea" id="RHEA-COMP:9945"/>
        <dbReference type="ChEBI" id="CHEBI:15377"/>
        <dbReference type="ChEBI" id="CHEBI:78784"/>
        <dbReference type="ChEBI" id="CHEBI:78827"/>
        <dbReference type="EC" id="4.2.1.59"/>
    </reaction>
</comment>
<comment type="subcellular location">
    <subcellularLocation>
        <location evidence="1">Cytoplasm</location>
    </subcellularLocation>
</comment>
<comment type="similarity">
    <text evidence="1">Belongs to the thioester dehydratase family. FabZ subfamily.</text>
</comment>
<proteinExistence type="inferred from homology"/>
<accession>Q2NBT4</accession>
<gene>
    <name evidence="1" type="primary">fabZ</name>
    <name type="ordered locus">ELI_03825</name>
</gene>
<sequence length="151" mass="16569">MSEQGSYDIQQVLKALPHRYPLLLVDRVKSMDLGERIHAVKGVTMNEEFFQGHFPGAPIMPGVLQVEAMAQAAAILGIETLELAGTGKLVFFMGIENAKFRKPVTPGCLLDLEVEFTQKRSRVYKFRGKASVEGVTTSEAEFTAMIADPPA</sequence>
<keyword id="KW-0963">Cytoplasm</keyword>
<keyword id="KW-0441">Lipid A biosynthesis</keyword>
<keyword id="KW-0444">Lipid biosynthesis</keyword>
<keyword id="KW-0443">Lipid metabolism</keyword>
<keyword id="KW-0456">Lyase</keyword>
<keyword id="KW-1185">Reference proteome</keyword>
<organism>
    <name type="scientific">Erythrobacter litoralis (strain HTCC2594)</name>
    <dbReference type="NCBI Taxonomy" id="314225"/>
    <lineage>
        <taxon>Bacteria</taxon>
        <taxon>Pseudomonadati</taxon>
        <taxon>Pseudomonadota</taxon>
        <taxon>Alphaproteobacteria</taxon>
        <taxon>Sphingomonadales</taxon>
        <taxon>Erythrobacteraceae</taxon>
        <taxon>Erythrobacter/Porphyrobacter group</taxon>
        <taxon>Erythrobacter</taxon>
    </lineage>
</organism>